<comment type="function">
    <text evidence="1">May help in the organization of the PsaE and PsaF subunits.</text>
</comment>
<comment type="subcellular location">
    <subcellularLocation>
        <location evidence="1">Cellular thylakoid membrane</location>
        <topology evidence="1">Single-pass membrane protein</topology>
    </subcellularLocation>
</comment>
<comment type="similarity">
    <text evidence="1">Belongs to the PsaJ family.</text>
</comment>
<sequence>MKDFLTYLSTAPVITAIWLGITAGILIEFNRFFPDLLFHPL</sequence>
<proteinExistence type="inferred from homology"/>
<dbReference type="EMBL" id="CP001344">
    <property type="protein sequence ID" value="ACL46315.1"/>
    <property type="molecule type" value="Genomic_DNA"/>
</dbReference>
<dbReference type="SMR" id="B8HVK3"/>
<dbReference type="STRING" id="395961.Cyan7425_4001"/>
<dbReference type="KEGG" id="cyn:Cyan7425_4001"/>
<dbReference type="eggNOG" id="ENOG5033A5A">
    <property type="taxonomic scope" value="Bacteria"/>
</dbReference>
<dbReference type="HOGENOM" id="CLU_212133_1_1_3"/>
<dbReference type="OrthoDB" id="532702at2"/>
<dbReference type="GO" id="GO:0009522">
    <property type="term" value="C:photosystem I"/>
    <property type="evidence" value="ECO:0007669"/>
    <property type="project" value="UniProtKB-KW"/>
</dbReference>
<dbReference type="GO" id="GO:0031676">
    <property type="term" value="C:plasma membrane-derived thylakoid membrane"/>
    <property type="evidence" value="ECO:0007669"/>
    <property type="project" value="UniProtKB-SubCell"/>
</dbReference>
<dbReference type="GO" id="GO:0015979">
    <property type="term" value="P:photosynthesis"/>
    <property type="evidence" value="ECO:0007669"/>
    <property type="project" value="UniProtKB-UniRule"/>
</dbReference>
<dbReference type="Gene3D" id="1.20.5.510">
    <property type="entry name" value="Single helix bin"/>
    <property type="match status" value="1"/>
</dbReference>
<dbReference type="HAMAP" id="MF_00522">
    <property type="entry name" value="PSI_PsaJ"/>
    <property type="match status" value="1"/>
</dbReference>
<dbReference type="InterPro" id="IPR002615">
    <property type="entry name" value="PSI_PsaJ"/>
</dbReference>
<dbReference type="InterPro" id="IPR036062">
    <property type="entry name" value="PSI_PsaJ_sf"/>
</dbReference>
<dbReference type="NCBIfam" id="NF002743">
    <property type="entry name" value="PRK02733.1"/>
    <property type="match status" value="1"/>
</dbReference>
<dbReference type="PANTHER" id="PTHR36082">
    <property type="match status" value="1"/>
</dbReference>
<dbReference type="PANTHER" id="PTHR36082:SF2">
    <property type="entry name" value="PHOTOSYSTEM I REACTION CENTER SUBUNIT IX"/>
    <property type="match status" value="1"/>
</dbReference>
<dbReference type="Pfam" id="PF01701">
    <property type="entry name" value="PSI_PsaJ"/>
    <property type="match status" value="1"/>
</dbReference>
<dbReference type="SUPFAM" id="SSF81544">
    <property type="entry name" value="Subunit IX of photosystem I reaction centre, PsaJ"/>
    <property type="match status" value="1"/>
</dbReference>
<gene>
    <name evidence="1" type="primary">psaJ</name>
    <name type="ordered locus">Cyan7425_4001</name>
</gene>
<name>PSAJ_CYAP4</name>
<organism>
    <name type="scientific">Cyanothece sp. (strain PCC 7425 / ATCC 29141)</name>
    <dbReference type="NCBI Taxonomy" id="395961"/>
    <lineage>
        <taxon>Bacteria</taxon>
        <taxon>Bacillati</taxon>
        <taxon>Cyanobacteriota</taxon>
        <taxon>Cyanophyceae</taxon>
        <taxon>Gomontiellales</taxon>
        <taxon>Cyanothecaceae</taxon>
        <taxon>Cyanothece</taxon>
    </lineage>
</organism>
<accession>B8HVK3</accession>
<feature type="chain" id="PRO_1000192866" description="Photosystem I reaction center subunit IX">
    <location>
        <begin position="1"/>
        <end position="41"/>
    </location>
</feature>
<feature type="transmembrane region" description="Helical" evidence="1">
    <location>
        <begin position="7"/>
        <end position="27"/>
    </location>
</feature>
<keyword id="KW-0472">Membrane</keyword>
<keyword id="KW-0602">Photosynthesis</keyword>
<keyword id="KW-0603">Photosystem I</keyword>
<keyword id="KW-0793">Thylakoid</keyword>
<keyword id="KW-0812">Transmembrane</keyword>
<keyword id="KW-1133">Transmembrane helix</keyword>
<evidence type="ECO:0000255" key="1">
    <source>
        <dbReference type="HAMAP-Rule" id="MF_00522"/>
    </source>
</evidence>
<protein>
    <recommendedName>
        <fullName evidence="1">Photosystem I reaction center subunit IX</fullName>
    </recommendedName>
</protein>
<reference key="1">
    <citation type="journal article" date="2011" name="MBio">
        <title>Novel metabolic attributes of the genus Cyanothece, comprising a group of unicellular nitrogen-fixing Cyanobacteria.</title>
        <authorList>
            <person name="Bandyopadhyay A."/>
            <person name="Elvitigala T."/>
            <person name="Welsh E."/>
            <person name="Stockel J."/>
            <person name="Liberton M."/>
            <person name="Min H."/>
            <person name="Sherman L.A."/>
            <person name="Pakrasi H.B."/>
        </authorList>
    </citation>
    <scope>NUCLEOTIDE SEQUENCE [LARGE SCALE GENOMIC DNA]</scope>
    <source>
        <strain>PCC 7425 / ATCC 29141</strain>
    </source>
</reference>